<feature type="initiator methionine" description="Removed" evidence="2">
    <location>
        <position position="1"/>
    </location>
</feature>
<feature type="chain" id="PRO_0000320054" description="DCN1-like protein 3">
    <location>
        <begin position="2"/>
        <end position="303"/>
    </location>
</feature>
<feature type="domain" description="DCUN1" evidence="3">
    <location>
        <begin position="85"/>
        <end position="277"/>
    </location>
</feature>
<feature type="region of interest" description="Disordered" evidence="4">
    <location>
        <begin position="1"/>
        <end position="41"/>
    </location>
</feature>
<feature type="region of interest" description="Disordered" evidence="4">
    <location>
        <begin position="62"/>
        <end position="83"/>
    </location>
</feature>
<feature type="region of interest" description="Disordered" evidence="4">
    <location>
        <begin position="284"/>
        <end position="303"/>
    </location>
</feature>
<feature type="compositionally biased region" description="Polar residues" evidence="4">
    <location>
        <begin position="294"/>
        <end position="303"/>
    </location>
</feature>
<feature type="lipid moiety-binding region" description="N-myristoyl glycine" evidence="1 2">
    <location>
        <position position="2"/>
    </location>
</feature>
<protein>
    <recommendedName>
        <fullName evidence="1">DCN1-like protein 3</fullName>
        <shortName evidence="1">DCNL3</shortName>
    </recommendedName>
    <alternativeName>
        <fullName>DCUN1 domain-containing protein 3</fullName>
    </alternativeName>
    <alternativeName>
        <fullName>Defective in cullin neddylation protein 1-like protein 3</fullName>
    </alternativeName>
</protein>
<proteinExistence type="evidence at transcript level"/>
<name>DCNL3_XENTR</name>
<keyword id="KW-1003">Cell membrane</keyword>
<keyword id="KW-0963">Cytoplasm</keyword>
<keyword id="KW-0449">Lipoprotein</keyword>
<keyword id="KW-0472">Membrane</keyword>
<keyword id="KW-0519">Myristate</keyword>
<keyword id="KW-0539">Nucleus</keyword>
<keyword id="KW-1185">Reference proteome</keyword>
<organism>
    <name type="scientific">Xenopus tropicalis</name>
    <name type="common">Western clawed frog</name>
    <name type="synonym">Silurana tropicalis</name>
    <dbReference type="NCBI Taxonomy" id="8364"/>
    <lineage>
        <taxon>Eukaryota</taxon>
        <taxon>Metazoa</taxon>
        <taxon>Chordata</taxon>
        <taxon>Craniata</taxon>
        <taxon>Vertebrata</taxon>
        <taxon>Euteleostomi</taxon>
        <taxon>Amphibia</taxon>
        <taxon>Batrachia</taxon>
        <taxon>Anura</taxon>
        <taxon>Pipoidea</taxon>
        <taxon>Pipidae</taxon>
        <taxon>Xenopodinae</taxon>
        <taxon>Xenopus</taxon>
        <taxon>Silurana</taxon>
    </lineage>
</organism>
<reference key="1">
    <citation type="submission" date="2007-03" db="EMBL/GenBank/DDBJ databases">
        <authorList>
            <consortium name="NIH - Xenopus Gene Collection (XGC) project"/>
        </authorList>
    </citation>
    <scope>NUCLEOTIDE SEQUENCE [LARGE SCALE MRNA]</scope>
</reference>
<accession>A4IHK8</accession>
<dbReference type="EMBL" id="BC135572">
    <property type="protein sequence ID" value="AAI35573.1"/>
    <property type="molecule type" value="mRNA"/>
</dbReference>
<dbReference type="RefSeq" id="NP_001096288.1">
    <property type="nucleotide sequence ID" value="NM_001102818.1"/>
</dbReference>
<dbReference type="RefSeq" id="XP_012825425.1">
    <property type="nucleotide sequence ID" value="XM_012969971.3"/>
</dbReference>
<dbReference type="RefSeq" id="XP_017952510.1">
    <property type="nucleotide sequence ID" value="XM_018097021.1"/>
</dbReference>
<dbReference type="SMR" id="A4IHK8"/>
<dbReference type="FunCoup" id="A4IHK8">
    <property type="interactions" value="2075"/>
</dbReference>
<dbReference type="STRING" id="8364.ENSXETP00000025151"/>
<dbReference type="PaxDb" id="8364-ENSXETP00000036490"/>
<dbReference type="DNASU" id="100124860"/>
<dbReference type="GeneID" id="100124860"/>
<dbReference type="KEGG" id="xtr:100124860"/>
<dbReference type="AGR" id="Xenbase:XB-GENE-6258756"/>
<dbReference type="CTD" id="123879"/>
<dbReference type="Xenbase" id="XB-GENE-6258756">
    <property type="gene designation" value="dcun1d3"/>
</dbReference>
<dbReference type="eggNOG" id="KOG3077">
    <property type="taxonomic scope" value="Eukaryota"/>
</dbReference>
<dbReference type="HOGENOM" id="CLU_047042_2_0_1"/>
<dbReference type="InParanoid" id="A4IHK8"/>
<dbReference type="OrthoDB" id="27198at2759"/>
<dbReference type="TreeFam" id="TF313332"/>
<dbReference type="Reactome" id="R-XTR-8951664">
    <property type="pathway name" value="Neddylation"/>
</dbReference>
<dbReference type="Proteomes" id="UP000008143">
    <property type="component" value="Chromosome 9"/>
</dbReference>
<dbReference type="Bgee" id="ENSXETG00000016729">
    <property type="expression patterns" value="Expressed in 4-cell stage embryo and 26 other cell types or tissues"/>
</dbReference>
<dbReference type="GO" id="GO:0005737">
    <property type="term" value="C:cytoplasm"/>
    <property type="evidence" value="ECO:0000250"/>
    <property type="project" value="UniProtKB"/>
</dbReference>
<dbReference type="GO" id="GO:0005634">
    <property type="term" value="C:nucleus"/>
    <property type="evidence" value="ECO:0000250"/>
    <property type="project" value="UniProtKB"/>
</dbReference>
<dbReference type="GO" id="GO:0048471">
    <property type="term" value="C:perinuclear region of cytoplasm"/>
    <property type="evidence" value="ECO:0007669"/>
    <property type="project" value="UniProtKB-SubCell"/>
</dbReference>
<dbReference type="GO" id="GO:0005886">
    <property type="term" value="C:plasma membrane"/>
    <property type="evidence" value="ECO:0000250"/>
    <property type="project" value="UniProtKB"/>
</dbReference>
<dbReference type="GO" id="GO:0097602">
    <property type="term" value="F:cullin family protein binding"/>
    <property type="evidence" value="ECO:0000250"/>
    <property type="project" value="UniProtKB"/>
</dbReference>
<dbReference type="GO" id="GO:2000435">
    <property type="term" value="P:negative regulation of protein neddylation"/>
    <property type="evidence" value="ECO:0000250"/>
    <property type="project" value="UniProtKB"/>
</dbReference>
<dbReference type="GO" id="GO:2000436">
    <property type="term" value="P:positive regulation of protein neddylation"/>
    <property type="evidence" value="ECO:0000250"/>
    <property type="project" value="UniProtKB"/>
</dbReference>
<dbReference type="GO" id="GO:0010564">
    <property type="term" value="P:regulation of cell cycle process"/>
    <property type="evidence" value="ECO:0000250"/>
    <property type="project" value="UniProtKB"/>
</dbReference>
<dbReference type="GO" id="GO:2000434">
    <property type="term" value="P:regulation of protein neddylation"/>
    <property type="evidence" value="ECO:0000250"/>
    <property type="project" value="UniProtKB"/>
</dbReference>
<dbReference type="FunFam" id="1.10.238.10:FF:000126">
    <property type="entry name" value="DCN1-like protein"/>
    <property type="match status" value="1"/>
</dbReference>
<dbReference type="FunFam" id="1.10.238.200:FF:000003">
    <property type="entry name" value="DCN1-like protein 3"/>
    <property type="match status" value="1"/>
</dbReference>
<dbReference type="Gene3D" id="1.10.238.200">
    <property type="entry name" value="Cullin, PONY binding domain"/>
    <property type="match status" value="1"/>
</dbReference>
<dbReference type="Gene3D" id="1.10.238.10">
    <property type="entry name" value="EF-hand"/>
    <property type="match status" value="1"/>
</dbReference>
<dbReference type="InterPro" id="IPR014764">
    <property type="entry name" value="DCN-prot"/>
</dbReference>
<dbReference type="InterPro" id="IPR042460">
    <property type="entry name" value="DCN1-like_PONY"/>
</dbReference>
<dbReference type="InterPro" id="IPR005176">
    <property type="entry name" value="PONY_dom"/>
</dbReference>
<dbReference type="PANTHER" id="PTHR12281:SF31">
    <property type="entry name" value="DCN1-LIKE PROTEIN 3"/>
    <property type="match status" value="1"/>
</dbReference>
<dbReference type="PANTHER" id="PTHR12281">
    <property type="entry name" value="RP42 RELATED"/>
    <property type="match status" value="1"/>
</dbReference>
<dbReference type="Pfam" id="PF03556">
    <property type="entry name" value="Cullin_binding"/>
    <property type="match status" value="1"/>
</dbReference>
<dbReference type="PROSITE" id="PS51229">
    <property type="entry name" value="DCUN1"/>
    <property type="match status" value="1"/>
</dbReference>
<sequence>MGQCVTKCKNPSSTLGSKNGERESSKPHKRSSSHKDEHLSICGKASREILVNGTKKGDVSLEASQPLAAGGDTKKKEQGTGAELSSVQRIEELFWRYKDEREDAILEEGMERFCNDLYVDPTEFRVLVLAWKFQAATMCKFTRREFFEGCKAINADGIEGICARFPSLLNEAKQEDKFKDLYRFTFQFGLDSEEGQRSLHREIAIALWKLVFTQNKPLILDQWLDFLTENPSGIKGISRDTWNMFLNFTQVIGPDLSNYSEDEAWPSLFDTFVEWEMERRKNEEETKCIPCSGTDDQSTEGQT</sequence>
<evidence type="ECO:0000250" key="1">
    <source>
        <dbReference type="UniProtKB" id="Q8IWE4"/>
    </source>
</evidence>
<evidence type="ECO:0000255" key="2"/>
<evidence type="ECO:0000255" key="3">
    <source>
        <dbReference type="PROSITE-ProRule" id="PRU00574"/>
    </source>
</evidence>
<evidence type="ECO:0000256" key="4">
    <source>
        <dbReference type="SAM" id="MobiDB-lite"/>
    </source>
</evidence>
<comment type="function">
    <text evidence="1">Contributes to the neddylation of all cullins by transferring NEDD8 from N-terminally acetylated NEDD8-conjugating E2s enzyme to different cullin C-terminal domain-RBX complexes. At the cell membrane, can promote and as well inhibit cullins neddylation.</text>
</comment>
<comment type="subunit">
    <text evidence="1">May interact (via the DCUN1 domain) with unneddylated cullins.</text>
</comment>
<comment type="subcellular location">
    <subcellularLocation>
        <location evidence="1">Cell membrane</location>
    </subcellularLocation>
    <subcellularLocation>
        <location evidence="1">Cytoplasm</location>
    </subcellularLocation>
    <subcellularLocation>
        <location evidence="1">Nucleus</location>
    </subcellularLocation>
    <subcellularLocation>
        <location evidence="1">Cytoplasm</location>
        <location evidence="1">Perinuclear region</location>
    </subcellularLocation>
</comment>
<comment type="domain">
    <text evidence="1">The DCUN1 domain, also known as PONY domain, mediates the interaction with different cullins.</text>
</comment>
<gene>
    <name evidence="1" type="primary">dcun1d3</name>
</gene>